<protein>
    <recommendedName>
        <fullName evidence="1">33 kDa chaperonin</fullName>
    </recommendedName>
    <alternativeName>
        <fullName evidence="1">Heat shock protein 33 homolog</fullName>
        <shortName evidence="1">HSP33</shortName>
    </alternativeName>
</protein>
<evidence type="ECO:0000255" key="1">
    <source>
        <dbReference type="HAMAP-Rule" id="MF_00117"/>
    </source>
</evidence>
<evidence type="ECO:0000305" key="2"/>
<feature type="chain" id="PRO_0000238100" description="33 kDa chaperonin">
    <location>
        <begin position="1"/>
        <end position="288"/>
    </location>
</feature>
<feature type="disulfide bond" description="Redox-active" evidence="1">
    <location>
        <begin position="235"/>
        <end position="237"/>
    </location>
</feature>
<feature type="disulfide bond" description="Redox-active" evidence="1">
    <location>
        <begin position="268"/>
        <end position="271"/>
    </location>
</feature>
<name>HSLO_STRT1</name>
<dbReference type="EMBL" id="CP000024">
    <property type="protein sequence ID" value="AAV61794.1"/>
    <property type="status" value="ALT_INIT"/>
    <property type="molecule type" value="Genomic_DNA"/>
</dbReference>
<dbReference type="RefSeq" id="WP_041826953.1">
    <property type="nucleotide sequence ID" value="NC_006449.1"/>
</dbReference>
<dbReference type="SMR" id="Q5M1P9"/>
<dbReference type="KEGG" id="stc:str0180"/>
<dbReference type="HOGENOM" id="CLU_054493_1_0_9"/>
<dbReference type="GO" id="GO:0005737">
    <property type="term" value="C:cytoplasm"/>
    <property type="evidence" value="ECO:0007669"/>
    <property type="project" value="UniProtKB-SubCell"/>
</dbReference>
<dbReference type="GO" id="GO:0044183">
    <property type="term" value="F:protein folding chaperone"/>
    <property type="evidence" value="ECO:0007669"/>
    <property type="project" value="TreeGrafter"/>
</dbReference>
<dbReference type="GO" id="GO:0051082">
    <property type="term" value="F:unfolded protein binding"/>
    <property type="evidence" value="ECO:0007669"/>
    <property type="project" value="UniProtKB-UniRule"/>
</dbReference>
<dbReference type="GO" id="GO:0042026">
    <property type="term" value="P:protein refolding"/>
    <property type="evidence" value="ECO:0007669"/>
    <property type="project" value="TreeGrafter"/>
</dbReference>
<dbReference type="CDD" id="cd00498">
    <property type="entry name" value="Hsp33"/>
    <property type="match status" value="1"/>
</dbReference>
<dbReference type="Gene3D" id="3.55.30.10">
    <property type="entry name" value="Hsp33 domain"/>
    <property type="match status" value="1"/>
</dbReference>
<dbReference type="Gene3D" id="3.90.1280.10">
    <property type="entry name" value="HSP33 redox switch-like"/>
    <property type="match status" value="1"/>
</dbReference>
<dbReference type="HAMAP" id="MF_00117">
    <property type="entry name" value="HslO"/>
    <property type="match status" value="1"/>
</dbReference>
<dbReference type="InterPro" id="IPR000397">
    <property type="entry name" value="Heat_shock_Hsp33"/>
</dbReference>
<dbReference type="InterPro" id="IPR016154">
    <property type="entry name" value="Heat_shock_Hsp33_C"/>
</dbReference>
<dbReference type="InterPro" id="IPR016153">
    <property type="entry name" value="Heat_shock_Hsp33_N"/>
</dbReference>
<dbReference type="NCBIfam" id="NF001033">
    <property type="entry name" value="PRK00114.1"/>
    <property type="match status" value="1"/>
</dbReference>
<dbReference type="PANTHER" id="PTHR30111">
    <property type="entry name" value="33 KDA CHAPERONIN"/>
    <property type="match status" value="1"/>
</dbReference>
<dbReference type="PANTHER" id="PTHR30111:SF1">
    <property type="entry name" value="33 KDA CHAPERONIN"/>
    <property type="match status" value="1"/>
</dbReference>
<dbReference type="Pfam" id="PF01430">
    <property type="entry name" value="HSP33"/>
    <property type="match status" value="1"/>
</dbReference>
<dbReference type="PIRSF" id="PIRSF005261">
    <property type="entry name" value="Heat_shock_Hsp33"/>
    <property type="match status" value="1"/>
</dbReference>
<dbReference type="SUPFAM" id="SSF64397">
    <property type="entry name" value="Hsp33 domain"/>
    <property type="match status" value="1"/>
</dbReference>
<dbReference type="SUPFAM" id="SSF118352">
    <property type="entry name" value="HSP33 redox switch-like"/>
    <property type="match status" value="1"/>
</dbReference>
<sequence length="288" mass="31489">MDKLIKTISESGSFRAYALDSTETVRTAQEKHNTLSSSTVALGRTLIANQILAANQKGDSKITVKVIGNGSFGHIISVADTKGHVKGYIQNPGVDIKKTATGEVLVGPFMGQGQFVSIIDYGTGNPYTSSTPLISGEIGEDFAYYLTESEQTPSAVGLNVLLDKEDKVKVAGGFMLQVLPGASEEEIARYEKRIQEMPAISTLLESDDHIEALLNAIYGDEPFKRLSEEELSFECDCSRERFENALLTLGKDELQAIKDEDHGAEIVCQFCQTKYEFSEADLEELIND</sequence>
<comment type="function">
    <text evidence="1">Redox regulated molecular chaperone. Protects both thermally unfolding and oxidatively damaged proteins from irreversible aggregation. Plays an important role in the bacterial defense system toward oxidative stress.</text>
</comment>
<comment type="subcellular location">
    <subcellularLocation>
        <location evidence="1">Cytoplasm</location>
    </subcellularLocation>
</comment>
<comment type="PTM">
    <text evidence="1">Under oxidizing conditions two disulfide bonds are formed involving the reactive cysteines. Under reducing conditions zinc is bound to the reactive cysteines and the protein is inactive.</text>
</comment>
<comment type="similarity">
    <text evidence="1">Belongs to the HSP33 family.</text>
</comment>
<comment type="sequence caution" evidence="2">
    <conflict type="erroneous initiation">
        <sequence resource="EMBL-CDS" id="AAV61794"/>
    </conflict>
</comment>
<organism>
    <name type="scientific">Streptococcus thermophilus (strain CNRZ 1066)</name>
    <dbReference type="NCBI Taxonomy" id="299768"/>
    <lineage>
        <taxon>Bacteria</taxon>
        <taxon>Bacillati</taxon>
        <taxon>Bacillota</taxon>
        <taxon>Bacilli</taxon>
        <taxon>Lactobacillales</taxon>
        <taxon>Streptococcaceae</taxon>
        <taxon>Streptococcus</taxon>
    </lineage>
</organism>
<proteinExistence type="inferred from homology"/>
<accession>Q5M1P9</accession>
<reference key="1">
    <citation type="journal article" date="2004" name="Nat. Biotechnol.">
        <title>Complete sequence and comparative genome analysis of the dairy bacterium Streptococcus thermophilus.</title>
        <authorList>
            <person name="Bolotin A."/>
            <person name="Quinquis B."/>
            <person name="Renault P."/>
            <person name="Sorokin A."/>
            <person name="Ehrlich S.D."/>
            <person name="Kulakauskas S."/>
            <person name="Lapidus A."/>
            <person name="Goltsman E."/>
            <person name="Mazur M."/>
            <person name="Pusch G.D."/>
            <person name="Fonstein M."/>
            <person name="Overbeek R."/>
            <person name="Kyprides N."/>
            <person name="Purnelle B."/>
            <person name="Prozzi D."/>
            <person name="Ngui K."/>
            <person name="Masuy D."/>
            <person name="Hancy F."/>
            <person name="Burteau S."/>
            <person name="Boutry M."/>
            <person name="Delcour J."/>
            <person name="Goffeau A."/>
            <person name="Hols P."/>
        </authorList>
    </citation>
    <scope>NUCLEOTIDE SEQUENCE [LARGE SCALE GENOMIC DNA]</scope>
    <source>
        <strain>CNRZ 1066</strain>
    </source>
</reference>
<keyword id="KW-0143">Chaperone</keyword>
<keyword id="KW-0963">Cytoplasm</keyword>
<keyword id="KW-1015">Disulfide bond</keyword>
<keyword id="KW-0676">Redox-active center</keyword>
<keyword id="KW-0862">Zinc</keyword>
<gene>
    <name evidence="1" type="primary">hslO</name>
    <name type="ordered locus">str0180</name>
</gene>